<reference key="1">
    <citation type="journal article" date="2003" name="Nat. Genet.">
        <title>Comparative analysis of the genome sequences of Bordetella pertussis, Bordetella parapertussis and Bordetella bronchiseptica.</title>
        <authorList>
            <person name="Parkhill J."/>
            <person name="Sebaihia M."/>
            <person name="Preston A."/>
            <person name="Murphy L.D."/>
            <person name="Thomson N.R."/>
            <person name="Harris D.E."/>
            <person name="Holden M.T.G."/>
            <person name="Churcher C.M."/>
            <person name="Bentley S.D."/>
            <person name="Mungall K.L."/>
            <person name="Cerdeno-Tarraga A.-M."/>
            <person name="Temple L."/>
            <person name="James K.D."/>
            <person name="Harris B."/>
            <person name="Quail M.A."/>
            <person name="Achtman M."/>
            <person name="Atkin R."/>
            <person name="Baker S."/>
            <person name="Basham D."/>
            <person name="Bason N."/>
            <person name="Cherevach I."/>
            <person name="Chillingworth T."/>
            <person name="Collins M."/>
            <person name="Cronin A."/>
            <person name="Davis P."/>
            <person name="Doggett J."/>
            <person name="Feltwell T."/>
            <person name="Goble A."/>
            <person name="Hamlin N."/>
            <person name="Hauser H."/>
            <person name="Holroyd S."/>
            <person name="Jagels K."/>
            <person name="Leather S."/>
            <person name="Moule S."/>
            <person name="Norberczak H."/>
            <person name="O'Neil S."/>
            <person name="Ormond D."/>
            <person name="Price C."/>
            <person name="Rabbinowitsch E."/>
            <person name="Rutter S."/>
            <person name="Sanders M."/>
            <person name="Saunders D."/>
            <person name="Seeger K."/>
            <person name="Sharp S."/>
            <person name="Simmonds M."/>
            <person name="Skelton J."/>
            <person name="Squares R."/>
            <person name="Squares S."/>
            <person name="Stevens K."/>
            <person name="Unwin L."/>
            <person name="Whitehead S."/>
            <person name="Barrell B.G."/>
            <person name="Maskell D.J."/>
        </authorList>
    </citation>
    <scope>NUCLEOTIDE SEQUENCE [LARGE SCALE GENOMIC DNA]</scope>
    <source>
        <strain>Tohama I / ATCC BAA-589 / NCTC 13251</strain>
    </source>
</reference>
<name>Y521_BORPE</name>
<dbReference type="EMBL" id="BX640412">
    <property type="protein sequence ID" value="CAE44850.1"/>
    <property type="molecule type" value="Genomic_DNA"/>
</dbReference>
<dbReference type="RefSeq" id="NP_879372.1">
    <property type="nucleotide sequence ID" value="NC_002929.2"/>
</dbReference>
<dbReference type="RefSeq" id="WP_003807743.1">
    <property type="nucleotide sequence ID" value="NZ_CP039022.1"/>
</dbReference>
<dbReference type="SMR" id="Q7VSB4"/>
<dbReference type="STRING" id="257313.BP0521"/>
<dbReference type="PaxDb" id="257313-BP0521"/>
<dbReference type="KEGG" id="bpe:BP0521"/>
<dbReference type="PATRIC" id="fig|257313.5.peg.562"/>
<dbReference type="eggNOG" id="COG3422">
    <property type="taxonomic scope" value="Bacteria"/>
</dbReference>
<dbReference type="HOGENOM" id="CLU_163886_0_0_4"/>
<dbReference type="Proteomes" id="UP000002676">
    <property type="component" value="Chromosome"/>
</dbReference>
<dbReference type="Gene3D" id="2.30.29.80">
    <property type="match status" value="1"/>
</dbReference>
<dbReference type="InterPro" id="IPR010879">
    <property type="entry name" value="DUF1508"/>
</dbReference>
<dbReference type="InterPro" id="IPR051141">
    <property type="entry name" value="UPF0339_domain"/>
</dbReference>
<dbReference type="InterPro" id="IPR036913">
    <property type="entry name" value="YegP-like_sf"/>
</dbReference>
<dbReference type="PANTHER" id="PTHR40606">
    <property type="match status" value="1"/>
</dbReference>
<dbReference type="PANTHER" id="PTHR40606:SF1">
    <property type="entry name" value="UPF0339 PROTEIN YEGP"/>
    <property type="match status" value="1"/>
</dbReference>
<dbReference type="Pfam" id="PF07411">
    <property type="entry name" value="DUF1508"/>
    <property type="match status" value="2"/>
</dbReference>
<dbReference type="SUPFAM" id="SSF160113">
    <property type="entry name" value="YegP-like"/>
    <property type="match status" value="2"/>
</dbReference>
<proteinExistence type="inferred from homology"/>
<accession>Q7VSB4</accession>
<protein>
    <recommendedName>
        <fullName>UPF0339 protein BP0521</fullName>
    </recommendedName>
</protein>
<evidence type="ECO:0000256" key="1">
    <source>
        <dbReference type="SAM" id="MobiDB-lite"/>
    </source>
</evidence>
<evidence type="ECO:0000305" key="2"/>
<organism>
    <name type="scientific">Bordetella pertussis (strain Tohama I / ATCC BAA-589 / NCTC 13251)</name>
    <dbReference type="NCBI Taxonomy" id="257313"/>
    <lineage>
        <taxon>Bacteria</taxon>
        <taxon>Pseudomonadati</taxon>
        <taxon>Pseudomonadota</taxon>
        <taxon>Betaproteobacteria</taxon>
        <taxon>Burkholderiales</taxon>
        <taxon>Alcaligenaceae</taxon>
        <taxon>Bordetella</taxon>
    </lineage>
</organism>
<feature type="chain" id="PRO_0000218133" description="UPF0339 protein BP0521">
    <location>
        <begin position="1"/>
        <end position="111"/>
    </location>
</feature>
<feature type="repeat" description="1">
    <location>
        <begin position="9"/>
        <end position="57"/>
    </location>
</feature>
<feature type="repeat" description="2">
    <location>
        <begin position="60"/>
        <end position="108"/>
    </location>
</feature>
<feature type="region of interest" description="Disordered" evidence="1">
    <location>
        <begin position="86"/>
        <end position="111"/>
    </location>
</feature>
<keyword id="KW-1185">Reference proteome</keyword>
<keyword id="KW-0677">Repeat</keyword>
<gene>
    <name type="ordered locus">BP0521</name>
</gene>
<comment type="similarity">
    <text evidence="2">Belongs to the UPF0339 family. Duplicated subfamily.</text>
</comment>
<sequence length="111" mass="11954">MSGYFVLKASGTQYMFNLHAGNHEIILTSERYTSKASAQDGIASVQKNAPDDARYQRLTAKDGSPYFSLTATNGQSIGRSEMYKTTQARDNGIASVKSNAPGAPTKDQTQA</sequence>